<accession>Q5RD21</accession>
<evidence type="ECO:0000250" key="1">
    <source>
        <dbReference type="UniProtKB" id="Q96DN5"/>
    </source>
</evidence>
<evidence type="ECO:0000255" key="2"/>
<evidence type="ECO:0000255" key="3">
    <source>
        <dbReference type="PROSITE-ProRule" id="PRU00163"/>
    </source>
</evidence>
<evidence type="ECO:0000256" key="4">
    <source>
        <dbReference type="SAM" id="MobiDB-lite"/>
    </source>
</evidence>
<evidence type="ECO:0000305" key="5"/>
<gene>
    <name evidence="1" type="primary">TBC1D31</name>
</gene>
<dbReference type="EMBL" id="CR858097">
    <property type="protein sequence ID" value="CAH90336.1"/>
    <property type="molecule type" value="mRNA"/>
</dbReference>
<dbReference type="RefSeq" id="NP_001125159.1">
    <property type="nucleotide sequence ID" value="NM_001131687.1"/>
</dbReference>
<dbReference type="SMR" id="Q5RD21"/>
<dbReference type="FunCoup" id="Q5RD21">
    <property type="interactions" value="1298"/>
</dbReference>
<dbReference type="STRING" id="9601.ENSPPYP00000021334"/>
<dbReference type="GeneID" id="100172046"/>
<dbReference type="KEGG" id="pon:100172046"/>
<dbReference type="CTD" id="93594"/>
<dbReference type="eggNOG" id="KOG0295">
    <property type="taxonomic scope" value="Eukaryota"/>
</dbReference>
<dbReference type="eggNOG" id="KOG1093">
    <property type="taxonomic scope" value="Eukaryota"/>
</dbReference>
<dbReference type="InParanoid" id="Q5RD21"/>
<dbReference type="OrthoDB" id="5578278at2759"/>
<dbReference type="Proteomes" id="UP000001595">
    <property type="component" value="Unplaced"/>
</dbReference>
<dbReference type="GO" id="GO:0034451">
    <property type="term" value="C:centriolar satellite"/>
    <property type="evidence" value="ECO:0000250"/>
    <property type="project" value="UniProtKB"/>
</dbReference>
<dbReference type="GO" id="GO:0005813">
    <property type="term" value="C:centrosome"/>
    <property type="evidence" value="ECO:0000250"/>
    <property type="project" value="UniProtKB"/>
</dbReference>
<dbReference type="GO" id="GO:0036064">
    <property type="term" value="C:ciliary basal body"/>
    <property type="evidence" value="ECO:0000250"/>
    <property type="project" value="UniProtKB"/>
</dbReference>
<dbReference type="GO" id="GO:0005737">
    <property type="term" value="C:cytoplasm"/>
    <property type="evidence" value="ECO:0007669"/>
    <property type="project" value="UniProtKB-KW"/>
</dbReference>
<dbReference type="GO" id="GO:0060090">
    <property type="term" value="F:molecular adaptor activity"/>
    <property type="evidence" value="ECO:0000250"/>
    <property type="project" value="UniProtKB"/>
</dbReference>
<dbReference type="GO" id="GO:0060271">
    <property type="term" value="P:cilium assembly"/>
    <property type="evidence" value="ECO:0000250"/>
    <property type="project" value="UniProtKB"/>
</dbReference>
<dbReference type="FunFam" id="2.130.10.10:FF:000226">
    <property type="entry name" value="TBC1 domain family member 31"/>
    <property type="match status" value="1"/>
</dbReference>
<dbReference type="FunFam" id="2.130.10.10:FF:000460">
    <property type="entry name" value="TBC1 domain family member 31 isoform X4"/>
    <property type="match status" value="1"/>
</dbReference>
<dbReference type="FunFam" id="1.10.472.80:FF:000022">
    <property type="entry name" value="TBC1 domain family, member 31"/>
    <property type="match status" value="1"/>
</dbReference>
<dbReference type="Gene3D" id="1.10.472.80">
    <property type="entry name" value="Ypt/Rab-GAP domain of gyp1p, domain 3"/>
    <property type="match status" value="1"/>
</dbReference>
<dbReference type="Gene3D" id="2.130.10.10">
    <property type="entry name" value="YVTN repeat-like/Quinoprotein amine dehydrogenase"/>
    <property type="match status" value="2"/>
</dbReference>
<dbReference type="InterPro" id="IPR000195">
    <property type="entry name" value="Rab-GAP-TBC_dom"/>
</dbReference>
<dbReference type="InterPro" id="IPR035969">
    <property type="entry name" value="Rab-GAP_TBC_sf"/>
</dbReference>
<dbReference type="InterPro" id="IPR051570">
    <property type="entry name" value="TBC1_cilium_biogenesis"/>
</dbReference>
<dbReference type="InterPro" id="IPR015943">
    <property type="entry name" value="WD40/YVTN_repeat-like_dom_sf"/>
</dbReference>
<dbReference type="InterPro" id="IPR036322">
    <property type="entry name" value="WD40_repeat_dom_sf"/>
</dbReference>
<dbReference type="InterPro" id="IPR001680">
    <property type="entry name" value="WD40_rpt"/>
</dbReference>
<dbReference type="PANTHER" id="PTHR19853:SF1">
    <property type="entry name" value="TBC1 DOMAIN FAMILY MEMBER 31"/>
    <property type="match status" value="1"/>
</dbReference>
<dbReference type="PANTHER" id="PTHR19853">
    <property type="entry name" value="WD REPEAT CONTAINING PROTEIN 3 WDR3"/>
    <property type="match status" value="1"/>
</dbReference>
<dbReference type="Pfam" id="PF00566">
    <property type="entry name" value="RabGAP-TBC"/>
    <property type="match status" value="1"/>
</dbReference>
<dbReference type="Pfam" id="PF00400">
    <property type="entry name" value="WD40"/>
    <property type="match status" value="1"/>
</dbReference>
<dbReference type="SMART" id="SM00320">
    <property type="entry name" value="WD40"/>
    <property type="match status" value="5"/>
</dbReference>
<dbReference type="SUPFAM" id="SSF50978">
    <property type="entry name" value="WD40 repeat-like"/>
    <property type="match status" value="1"/>
</dbReference>
<dbReference type="SUPFAM" id="SSF47923">
    <property type="entry name" value="Ypt/Rab-GAP domain of gyp1p"/>
    <property type="match status" value="1"/>
</dbReference>
<dbReference type="PROSITE" id="PS50086">
    <property type="entry name" value="TBC_RABGAP"/>
    <property type="match status" value="1"/>
</dbReference>
<dbReference type="PROSITE" id="PS00678">
    <property type="entry name" value="WD_REPEATS_1"/>
    <property type="match status" value="1"/>
</dbReference>
<dbReference type="PROSITE" id="PS50294">
    <property type="entry name" value="WD_REPEATS_REGION"/>
    <property type="match status" value="1"/>
</dbReference>
<protein>
    <recommendedName>
        <fullName evidence="5">TBC1 domain family member 31</fullName>
    </recommendedName>
</protein>
<feature type="chain" id="PRO_0000051422" description="TBC1 domain family member 31">
    <location>
        <begin position="1"/>
        <end position="944"/>
    </location>
</feature>
<feature type="repeat" description="WD 1">
    <location>
        <begin position="12"/>
        <end position="52"/>
    </location>
</feature>
<feature type="repeat" description="WD 2">
    <location>
        <begin position="53"/>
        <end position="95"/>
    </location>
</feature>
<feature type="repeat" description="WD 3">
    <location>
        <begin position="96"/>
        <end position="143"/>
    </location>
</feature>
<feature type="repeat" description="WD 4">
    <location>
        <begin position="144"/>
        <end position="191"/>
    </location>
</feature>
<feature type="repeat" description="WD 5">
    <location>
        <begin position="192"/>
        <end position="229"/>
    </location>
</feature>
<feature type="domain" description="Rab-GAP TBC" evidence="3">
    <location>
        <begin position="300"/>
        <end position="476"/>
    </location>
</feature>
<feature type="region of interest" description="Disordered" evidence="4">
    <location>
        <begin position="262"/>
        <end position="281"/>
    </location>
</feature>
<feature type="region of interest" description="Disordered" evidence="4">
    <location>
        <begin position="865"/>
        <end position="900"/>
    </location>
</feature>
<feature type="region of interest" description="Mediates direct interaction with PJA2" evidence="1">
    <location>
        <begin position="931"/>
        <end position="934"/>
    </location>
</feature>
<feature type="coiled-coil region" evidence="2">
    <location>
        <begin position="605"/>
        <end position="735"/>
    </location>
</feature>
<feature type="coiled-coil region" evidence="2">
    <location>
        <begin position="791"/>
        <end position="825"/>
    </location>
</feature>
<feature type="compositionally biased region" description="Basic and acidic residues" evidence="4">
    <location>
        <begin position="865"/>
        <end position="875"/>
    </location>
</feature>
<feature type="compositionally biased region" description="Polar residues" evidence="4">
    <location>
        <begin position="883"/>
        <end position="900"/>
    </location>
</feature>
<reference key="1">
    <citation type="submission" date="2004-11" db="EMBL/GenBank/DDBJ databases">
        <authorList>
            <consortium name="The German cDNA consortium"/>
        </authorList>
    </citation>
    <scope>NUCLEOTIDE SEQUENCE [LARGE SCALE MRNA]</scope>
    <source>
        <tissue>Brain cortex</tissue>
    </source>
</reference>
<name>TBC31_PONAB</name>
<keyword id="KW-0966">Cell projection</keyword>
<keyword id="KW-0970">Cilium biogenesis/degradation</keyword>
<keyword id="KW-0175">Coiled coil</keyword>
<keyword id="KW-0963">Cytoplasm</keyword>
<keyword id="KW-0206">Cytoskeleton</keyword>
<keyword id="KW-1185">Reference proteome</keyword>
<keyword id="KW-0677">Repeat</keyword>
<keyword id="KW-0853">WD repeat</keyword>
<comment type="function">
    <text evidence="1">Molecular adapter which is involved in cilium biogenesis. Part of a functional complex including OFD1 a centriolar protein involved in cilium assembly. Could regulate the cAMP-dependent phosphorylation of OFD1, and its subsequent ubiquitination by PJA2 which ultimately leads to its proteasomal degradation.</text>
</comment>
<comment type="subunit">
    <text evidence="1">Interacts with PJA2; the interaction is direct and recruits PJA2 to centrosomes. Interacts with OFD1; regulates its activity in cilium assembly. Interacts with PRKACA.</text>
</comment>
<comment type="subcellular location">
    <subcellularLocation>
        <location evidence="1">Cytoplasm</location>
        <location evidence="1">Cytoskeleton</location>
        <location evidence="1">Microtubule organizing center</location>
        <location evidence="1">Centrosome</location>
    </subcellularLocation>
    <subcellularLocation>
        <location evidence="1">Cytoplasm</location>
        <location evidence="1">Cytoskeleton</location>
        <location evidence="1">Microtubule organizing center</location>
        <location evidence="1">Centrosome</location>
        <location evidence="1">Centriolar satellite</location>
    </subcellularLocation>
    <subcellularLocation>
        <location evidence="1">Cytoplasm</location>
        <location evidence="1">Cytoskeleton</location>
        <location evidence="1">Cilium basal body</location>
    </subcellularLocation>
</comment>
<sequence>MFLTCMETVTKELVSWMRGHESSVFSISVHASGKYAITTSSDTAQLWDLDTFQRKRRLNIRQSVGIQKVFFLPLSNTILSCFKDNSIFAWECDTLFCKYQLPAPPESSSILYKVFAVTRDGRILAAGGKSNHLHLWCLEARQLFRIIQMPTKVRAIRHLEFLPDSFDAGSNQVLGVLSQDGIMRFINIQTCKLLFEIGSLDEGISSSAISPHGRYIASIMEDGSLNIYSVQALTQEVNKPPPPLVKVIEDLPKNKLSSSDLKRKVTSGRVQQPAKSRESKIQTRILKQDLTGDFESKKNELPDGLNKERLQILLKGYGEYPTKYSTLIDKGTHVAFLNLQKKYPIKSRKLLRVLQRTLSALAHWSVIFSDTPYLPLLAFPFVKLFQNNQLICFEVIATLIINWCQHWFEYFPNPPINILSMIENVLAFHDTELLQHFIDHDITSQLYAWPLLETVFSEVLTREEWLKLFDNIFSNHPSFLLMTVVAYNMCSRVPLLNCNLKDDFEFFFHHRNNLDINVVIRQVYHLMETTPTDIHPDSMLNVFVALTKGQHPVFNQYPKFIVDYQTQERERIGNDELDYLRERQTVEDMQAKVDQQRVEDEAWYQKQELLRKAEETRREMLLQEEEKMIQQRQRLAAVKRELKVKEMHLQDAARRRFLKLQQDQQEMELRRLDDEIGRKVYMRDREIAATARELEMRQLELESQKRLYEKNLTENQEAVAKEMRADADAYRQKVDLEEHMFHKLIEAGETQSQKTQKVIKENLAKAEQACLNTDWQIQSLHKQKCDDLQRNKCYQEVAKLLRENRRKEIEIINAMVEEEAKKWKEAEGKEFCLRSAKKASALSDASRKWFLKQEINAAVEHAENPCHKEEPRFQNEQEDSSCLPRTSQLNDSSEMDPSTQISLNRRAVEWDTTGQYLIKKVRNLRQRLAAQARHRCQTAHLLAA</sequence>
<proteinExistence type="evidence at transcript level"/>
<organism>
    <name type="scientific">Pongo abelii</name>
    <name type="common">Sumatran orangutan</name>
    <name type="synonym">Pongo pygmaeus abelii</name>
    <dbReference type="NCBI Taxonomy" id="9601"/>
    <lineage>
        <taxon>Eukaryota</taxon>
        <taxon>Metazoa</taxon>
        <taxon>Chordata</taxon>
        <taxon>Craniata</taxon>
        <taxon>Vertebrata</taxon>
        <taxon>Euteleostomi</taxon>
        <taxon>Mammalia</taxon>
        <taxon>Eutheria</taxon>
        <taxon>Euarchontoglires</taxon>
        <taxon>Primates</taxon>
        <taxon>Haplorrhini</taxon>
        <taxon>Catarrhini</taxon>
        <taxon>Hominidae</taxon>
        <taxon>Pongo</taxon>
    </lineage>
</organism>